<proteinExistence type="evidence at protein level"/>
<protein>
    <recommendedName>
        <fullName>Probable acrylyl-CoA reductase AcuI</fullName>
        <ecNumber>1.3.1.84</ecNumber>
    </recommendedName>
    <alternativeName>
        <fullName>Acryloyl-coenzyme A reductase AcuI</fullName>
    </alternativeName>
</protein>
<organism>
    <name type="scientific">Escherichia coli (strain K12)</name>
    <dbReference type="NCBI Taxonomy" id="83333"/>
    <lineage>
        <taxon>Bacteria</taxon>
        <taxon>Pseudomonadati</taxon>
        <taxon>Pseudomonadota</taxon>
        <taxon>Gammaproteobacteria</taxon>
        <taxon>Enterobacterales</taxon>
        <taxon>Enterobacteriaceae</taxon>
        <taxon>Escherichia</taxon>
    </lineage>
</organism>
<feature type="chain" id="PRO_0000169493" description="Probable acrylyl-CoA reductase AcuI">
    <location>
        <begin position="1"/>
        <end position="324"/>
    </location>
</feature>
<feature type="binding site" evidence="1">
    <location>
        <position position="41"/>
    </location>
    <ligand>
        <name>NADP(+)</name>
        <dbReference type="ChEBI" id="CHEBI:58349"/>
    </ligand>
</feature>
<feature type="binding site" evidence="1">
    <location>
        <begin position="156"/>
        <end position="159"/>
    </location>
    <ligand>
        <name>NADP(+)</name>
        <dbReference type="ChEBI" id="CHEBI:58349"/>
    </ligand>
</feature>
<feature type="binding site" evidence="1">
    <location>
        <begin position="178"/>
        <end position="180"/>
    </location>
    <ligand>
        <name>NADP(+)</name>
        <dbReference type="ChEBI" id="CHEBI:58349"/>
    </ligand>
</feature>
<feature type="binding site" evidence="1">
    <location>
        <position position="198"/>
    </location>
    <ligand>
        <name>NADP(+)</name>
        <dbReference type="ChEBI" id="CHEBI:58349"/>
    </ligand>
</feature>
<feature type="binding site" evidence="1">
    <location>
        <position position="242"/>
    </location>
    <ligand>
        <name>NADP(+)</name>
        <dbReference type="ChEBI" id="CHEBI:58349"/>
    </ligand>
</feature>
<feature type="binding site" evidence="1">
    <location>
        <position position="256"/>
    </location>
    <ligand>
        <name>NADP(+)</name>
        <dbReference type="ChEBI" id="CHEBI:58349"/>
    </ligand>
</feature>
<feature type="binding site" evidence="1">
    <location>
        <position position="267"/>
    </location>
    <ligand>
        <name>NADP(+)</name>
        <dbReference type="ChEBI" id="CHEBI:58349"/>
    </ligand>
</feature>
<feature type="binding site" evidence="1">
    <location>
        <position position="313"/>
    </location>
    <ligand>
        <name>NADP(+)</name>
        <dbReference type="ChEBI" id="CHEBI:58349"/>
    </ligand>
</feature>
<feature type="strand" evidence="4">
    <location>
        <begin position="2"/>
        <end position="7"/>
    </location>
</feature>
<feature type="strand" evidence="4">
    <location>
        <begin position="14"/>
        <end position="19"/>
    </location>
</feature>
<feature type="helix" evidence="4">
    <location>
        <begin position="22"/>
        <end position="24"/>
    </location>
</feature>
<feature type="strand" evidence="4">
    <location>
        <begin position="29"/>
        <end position="38"/>
    </location>
</feature>
<feature type="helix" evidence="4">
    <location>
        <begin position="41"/>
        <end position="48"/>
    </location>
</feature>
<feature type="helix" evidence="5">
    <location>
        <begin position="50"/>
        <end position="52"/>
    </location>
</feature>
<feature type="strand" evidence="4">
    <location>
        <begin position="56"/>
        <end position="59"/>
    </location>
</feature>
<feature type="strand" evidence="4">
    <location>
        <begin position="63"/>
        <end position="72"/>
    </location>
</feature>
<feature type="strand" evidence="4">
    <location>
        <begin position="82"/>
        <end position="86"/>
    </location>
</feature>
<feature type="turn" evidence="4">
    <location>
        <begin position="88"/>
        <end position="92"/>
    </location>
</feature>
<feature type="strand" evidence="4">
    <location>
        <begin position="97"/>
        <end position="104"/>
    </location>
</feature>
<feature type="helix" evidence="4">
    <location>
        <begin position="106"/>
        <end position="108"/>
    </location>
</feature>
<feature type="helix" evidence="4">
    <location>
        <begin position="118"/>
        <end position="140"/>
    </location>
</feature>
<feature type="helix" evidence="4">
    <location>
        <begin position="145"/>
        <end position="147"/>
    </location>
</feature>
<feature type="strand" evidence="4">
    <location>
        <begin position="149"/>
        <end position="154"/>
    </location>
</feature>
<feature type="helix" evidence="4">
    <location>
        <begin position="158"/>
        <end position="169"/>
    </location>
</feature>
<feature type="strand" evidence="4">
    <location>
        <begin position="174"/>
        <end position="179"/>
    </location>
</feature>
<feature type="helix" evidence="4">
    <location>
        <begin position="181"/>
        <end position="183"/>
    </location>
</feature>
<feature type="helix" evidence="4">
    <location>
        <begin position="184"/>
        <end position="190"/>
    </location>
</feature>
<feature type="strand" evidence="4">
    <location>
        <begin position="192"/>
        <end position="197"/>
    </location>
</feature>
<feature type="helix" evidence="4">
    <location>
        <begin position="198"/>
        <end position="200"/>
    </location>
</feature>
<feature type="strand" evidence="4">
    <location>
        <begin position="201"/>
        <end position="203"/>
    </location>
</feature>
<feature type="strand" evidence="4">
    <location>
        <begin position="212"/>
        <end position="219"/>
    </location>
</feature>
<feature type="helix" evidence="4">
    <location>
        <begin position="221"/>
        <end position="229"/>
    </location>
</feature>
<feature type="strand" evidence="4">
    <location>
        <begin position="231"/>
        <end position="239"/>
    </location>
</feature>
<feature type="strand" evidence="5">
    <location>
        <begin position="246"/>
        <end position="252"/>
    </location>
</feature>
<feature type="helix" evidence="4">
    <location>
        <begin position="253"/>
        <end position="258"/>
    </location>
</feature>
<feature type="strand" evidence="4">
    <location>
        <begin position="261"/>
        <end position="264"/>
    </location>
</feature>
<feature type="strand" evidence="4">
    <location>
        <begin position="267"/>
        <end position="269"/>
    </location>
</feature>
<feature type="helix" evidence="4">
    <location>
        <begin position="272"/>
        <end position="285"/>
    </location>
</feature>
<feature type="helix" evidence="4">
    <location>
        <begin position="288"/>
        <end position="291"/>
    </location>
</feature>
<feature type="strand" evidence="4">
    <location>
        <begin position="296"/>
        <end position="298"/>
    </location>
</feature>
<feature type="helix" evidence="4">
    <location>
        <begin position="300"/>
        <end position="302"/>
    </location>
</feature>
<feature type="helix" evidence="4">
    <location>
        <begin position="303"/>
        <end position="311"/>
    </location>
</feature>
<feature type="strand" evidence="4">
    <location>
        <begin position="319"/>
        <end position="322"/>
    </location>
</feature>
<reference key="1">
    <citation type="journal article" date="1992" name="J. Biol. Chem.">
        <title>The gene encoding the biotin carboxylase subunit of Escherichia coli acetyl-CoA carboxylase.</title>
        <authorList>
            <person name="Li S.-J."/>
            <person name="Cronan J.E. Jr."/>
        </authorList>
    </citation>
    <scope>NUCLEOTIDE SEQUENCE [GENOMIC DNA]</scope>
    <source>
        <strain>K12</strain>
    </source>
</reference>
<reference key="2">
    <citation type="journal article" date="1997" name="Science">
        <title>The complete genome sequence of Escherichia coli K-12.</title>
        <authorList>
            <person name="Blattner F.R."/>
            <person name="Plunkett G. III"/>
            <person name="Bloch C.A."/>
            <person name="Perna N.T."/>
            <person name="Burland V."/>
            <person name="Riley M."/>
            <person name="Collado-Vides J."/>
            <person name="Glasner J.D."/>
            <person name="Rode C.K."/>
            <person name="Mayhew G.F."/>
            <person name="Gregor J."/>
            <person name="Davis N.W."/>
            <person name="Kirkpatrick H.A."/>
            <person name="Goeden M.A."/>
            <person name="Rose D.J."/>
            <person name="Mau B."/>
            <person name="Shao Y."/>
        </authorList>
    </citation>
    <scope>NUCLEOTIDE SEQUENCE [LARGE SCALE GENOMIC DNA]</scope>
    <source>
        <strain>K12 / MG1655 / ATCC 47076</strain>
    </source>
</reference>
<reference key="3">
    <citation type="journal article" date="2006" name="Mol. Syst. Biol.">
        <title>Highly accurate genome sequences of Escherichia coli K-12 strains MG1655 and W3110.</title>
        <authorList>
            <person name="Hayashi K."/>
            <person name="Morooka N."/>
            <person name="Yamamoto Y."/>
            <person name="Fujita K."/>
            <person name="Isono K."/>
            <person name="Choi S."/>
            <person name="Ohtsubo E."/>
            <person name="Baba T."/>
            <person name="Wanner B.L."/>
            <person name="Mori H."/>
            <person name="Horiuchi T."/>
        </authorList>
    </citation>
    <scope>NUCLEOTIDE SEQUENCE [LARGE SCALE GENOMIC DNA]</scope>
    <source>
        <strain>K12 / W3110 / ATCC 27325 / DSM 5911</strain>
    </source>
</reference>
<reference key="4">
    <citation type="journal article" date="2012" name="PLoS ONE">
        <title>The Ruegeria pomeroyi acuI gene has a role in DMSP catabolism and resembles yhdH of E. coli and other bacteria in conferring resistance to acrylate.</title>
        <authorList>
            <person name="Todd J.D."/>
            <person name="Curson A.R."/>
            <person name="Sullivan M.J."/>
            <person name="Kirkwood M."/>
            <person name="Johnston A.W."/>
        </authorList>
    </citation>
    <scope>DISRUPTION PHENOTYPE</scope>
    <scope>FUNCTION</scope>
    <source>
        <strain>K12 / BW25113</strain>
    </source>
</reference>
<reference key="5">
    <citation type="journal article" date="2004" name="Acta Crystallogr. D">
        <title>Structure of Escherichia coli YhdH, a putative quinone oxidoreductase.</title>
        <authorList>
            <person name="Sulzenbacher G."/>
            <person name="Roig-Zamboni V."/>
            <person name="Pagot F."/>
            <person name="Grisel S."/>
            <person name="Salomoni A."/>
            <person name="Valencia C."/>
            <person name="Campanacci V."/>
            <person name="Vincentelli R."/>
            <person name="Tegoni M."/>
            <person name="Eklund H."/>
            <person name="Cambillau C."/>
        </authorList>
    </citation>
    <scope>X-RAY CRYSTALLOGRAPHY (2.25 ANGSTROMS) IN COMPLEX WITH NADP</scope>
    <scope>SUBUNIT</scope>
</reference>
<gene>
    <name type="primary">acuI</name>
    <name type="synonym">yhdH</name>
    <name type="ordered locus">b3253</name>
    <name type="ordered locus">JW3222</name>
</gene>
<accession>P26646</accession>
<accession>Q2M8W1</accession>
<keyword id="KW-0002">3D-structure</keyword>
<keyword id="KW-0963">Cytoplasm</keyword>
<keyword id="KW-0521">NADP</keyword>
<keyword id="KW-0560">Oxidoreductase</keyword>
<keyword id="KW-1185">Reference proteome</keyword>
<comment type="function">
    <text evidence="2">Probably catalyzes the NADPH-dependent reduction of acrylyl-CoA to propanoyl-CoA.</text>
</comment>
<comment type="catalytic activity">
    <reaction>
        <text>propanoyl-CoA + NADP(+) = acryloyl-CoA + NADPH + H(+)</text>
        <dbReference type="Rhea" id="RHEA:26454"/>
        <dbReference type="ChEBI" id="CHEBI:15378"/>
        <dbReference type="ChEBI" id="CHEBI:57367"/>
        <dbReference type="ChEBI" id="CHEBI:57392"/>
        <dbReference type="ChEBI" id="CHEBI:57783"/>
        <dbReference type="ChEBI" id="CHEBI:58349"/>
        <dbReference type="EC" id="1.3.1.84"/>
    </reaction>
</comment>
<comment type="subunit">
    <text evidence="1">Homodimer.</text>
</comment>
<comment type="subcellular location">
    <subcellularLocation>
        <location evidence="3">Cytoplasm</location>
    </subcellularLocation>
</comment>
<comment type="disruption phenotype">
    <text evidence="2">100-fold increased sensitivity to acrylate, about 8-fold increased sensitivity to 3-hydroxypropionate. Acrylate is bacteriostatic, not bacteriocidal. Can be complemented by acuI from a number of other bacteria, including Rhodobacter sphaeroides strain 2.4.1 (AC Q3J6K9) and Ruegeria pomeyroi (AC Q5LS56).</text>
</comment>
<comment type="miscellaneous">
    <text>The zinc-binding residues of the alcohol dehydrogenase family are not conserved.</text>
</comment>
<comment type="similarity">
    <text evidence="3">Belongs to the zinc-containing alcohol dehydrogenase family. Acrylyl-CoA reductase subfamily.</text>
</comment>
<dbReference type="EC" id="1.3.1.84"/>
<dbReference type="EMBL" id="M80458">
    <property type="protein sequence ID" value="AAA23407.1"/>
    <property type="molecule type" value="Genomic_DNA"/>
</dbReference>
<dbReference type="EMBL" id="U18997">
    <property type="protein sequence ID" value="AAA58056.1"/>
    <property type="molecule type" value="Genomic_DNA"/>
</dbReference>
<dbReference type="EMBL" id="U00096">
    <property type="protein sequence ID" value="AAC76285.1"/>
    <property type="molecule type" value="Genomic_DNA"/>
</dbReference>
<dbReference type="EMBL" id="AP009048">
    <property type="protein sequence ID" value="BAE77295.1"/>
    <property type="molecule type" value="Genomic_DNA"/>
</dbReference>
<dbReference type="PIR" id="JS0688">
    <property type="entry name" value="JS0688"/>
</dbReference>
<dbReference type="RefSeq" id="NP_417719.1">
    <property type="nucleotide sequence ID" value="NC_000913.3"/>
</dbReference>
<dbReference type="RefSeq" id="WP_001148481.1">
    <property type="nucleotide sequence ID" value="NZ_SSZK01000034.1"/>
</dbReference>
<dbReference type="PDB" id="1O89">
    <property type="method" value="X-ray"/>
    <property type="resolution" value="2.25 A"/>
    <property type="chains" value="A=2-324"/>
</dbReference>
<dbReference type="PDB" id="1O8C">
    <property type="method" value="X-ray"/>
    <property type="resolution" value="2.60 A"/>
    <property type="chains" value="A/B/C/D=2-324"/>
</dbReference>
<dbReference type="PDBsum" id="1O89"/>
<dbReference type="PDBsum" id="1O8C"/>
<dbReference type="SMR" id="P26646"/>
<dbReference type="BioGRID" id="4261942">
    <property type="interactions" value="12"/>
</dbReference>
<dbReference type="BioGRID" id="852159">
    <property type="interactions" value="1"/>
</dbReference>
<dbReference type="DIP" id="DIP-12295N"/>
<dbReference type="FunCoup" id="P26646">
    <property type="interactions" value="144"/>
</dbReference>
<dbReference type="IntAct" id="P26646">
    <property type="interactions" value="6"/>
</dbReference>
<dbReference type="STRING" id="511145.b3253"/>
<dbReference type="jPOST" id="P26646"/>
<dbReference type="PaxDb" id="511145-b3253"/>
<dbReference type="EnsemblBacteria" id="AAC76285">
    <property type="protein sequence ID" value="AAC76285"/>
    <property type="gene ID" value="b3253"/>
</dbReference>
<dbReference type="GeneID" id="947848"/>
<dbReference type="KEGG" id="ecj:JW3222"/>
<dbReference type="KEGG" id="eco:b3253"/>
<dbReference type="KEGG" id="ecoc:C3026_17690"/>
<dbReference type="PATRIC" id="fig|1411691.4.peg.3476"/>
<dbReference type="EchoBASE" id="EB1291"/>
<dbReference type="eggNOG" id="COG0604">
    <property type="taxonomic scope" value="Bacteria"/>
</dbReference>
<dbReference type="HOGENOM" id="CLU_026673_26_3_6"/>
<dbReference type="InParanoid" id="P26646"/>
<dbReference type="OMA" id="VRSFPMV"/>
<dbReference type="OrthoDB" id="9782155at2"/>
<dbReference type="PhylomeDB" id="P26646"/>
<dbReference type="BioCyc" id="EcoCyc:EG11315-MONOMER"/>
<dbReference type="BioCyc" id="MetaCyc:EG11315-MONOMER"/>
<dbReference type="BRENDA" id="1.3.1.84">
    <property type="organism ID" value="2026"/>
</dbReference>
<dbReference type="EvolutionaryTrace" id="P26646"/>
<dbReference type="PRO" id="PR:P26646"/>
<dbReference type="Proteomes" id="UP000000625">
    <property type="component" value="Chromosome"/>
</dbReference>
<dbReference type="GO" id="GO:0005737">
    <property type="term" value="C:cytoplasm"/>
    <property type="evidence" value="ECO:0007669"/>
    <property type="project" value="UniProtKB-SubCell"/>
</dbReference>
<dbReference type="GO" id="GO:0043957">
    <property type="term" value="F:acryloyl-CoA reductase (NADPH) activity"/>
    <property type="evidence" value="ECO:0000314"/>
    <property type="project" value="EcoCyc"/>
</dbReference>
<dbReference type="GO" id="GO:0042803">
    <property type="term" value="F:protein homodimerization activity"/>
    <property type="evidence" value="ECO:0000314"/>
    <property type="project" value="EcoCyc"/>
</dbReference>
<dbReference type="CDD" id="cd08288">
    <property type="entry name" value="MDR_yhdh"/>
    <property type="match status" value="1"/>
</dbReference>
<dbReference type="FunFam" id="3.40.50.720:FF:000128">
    <property type="entry name" value="Quinone oxidoreductase YhdH"/>
    <property type="match status" value="1"/>
</dbReference>
<dbReference type="Gene3D" id="3.90.180.10">
    <property type="entry name" value="Medium-chain alcohol dehydrogenases, catalytic domain"/>
    <property type="match status" value="1"/>
</dbReference>
<dbReference type="Gene3D" id="3.40.50.720">
    <property type="entry name" value="NAD(P)-binding Rossmann-like Domain"/>
    <property type="match status" value="1"/>
</dbReference>
<dbReference type="InterPro" id="IPR014188">
    <property type="entry name" value="Acrylyl-CoA_reductase_AcuI"/>
</dbReference>
<dbReference type="InterPro" id="IPR013149">
    <property type="entry name" value="ADH-like_C"/>
</dbReference>
<dbReference type="InterPro" id="IPR013154">
    <property type="entry name" value="ADH-like_N"/>
</dbReference>
<dbReference type="InterPro" id="IPR011032">
    <property type="entry name" value="GroES-like_sf"/>
</dbReference>
<dbReference type="InterPro" id="IPR036291">
    <property type="entry name" value="NAD(P)-bd_dom_sf"/>
</dbReference>
<dbReference type="InterPro" id="IPR020843">
    <property type="entry name" value="PKS_ER"/>
</dbReference>
<dbReference type="InterPro" id="IPR051397">
    <property type="entry name" value="Zn-ADH-like_protein"/>
</dbReference>
<dbReference type="NCBIfam" id="TIGR02823">
    <property type="entry name" value="oxido_YhdH"/>
    <property type="match status" value="1"/>
</dbReference>
<dbReference type="PANTHER" id="PTHR43677:SF1">
    <property type="entry name" value="ACRYLYL-COA REDUCTASE ACUI-RELATED"/>
    <property type="match status" value="1"/>
</dbReference>
<dbReference type="PANTHER" id="PTHR43677">
    <property type="entry name" value="SHORT-CHAIN DEHYDROGENASE/REDUCTASE"/>
    <property type="match status" value="1"/>
</dbReference>
<dbReference type="Pfam" id="PF08240">
    <property type="entry name" value="ADH_N"/>
    <property type="match status" value="1"/>
</dbReference>
<dbReference type="Pfam" id="PF00107">
    <property type="entry name" value="ADH_zinc_N"/>
    <property type="match status" value="1"/>
</dbReference>
<dbReference type="SMART" id="SM00829">
    <property type="entry name" value="PKS_ER"/>
    <property type="match status" value="1"/>
</dbReference>
<dbReference type="SUPFAM" id="SSF50129">
    <property type="entry name" value="GroES-like"/>
    <property type="match status" value="1"/>
</dbReference>
<dbReference type="SUPFAM" id="SSF51735">
    <property type="entry name" value="NAD(P)-binding Rossmann-fold domains"/>
    <property type="match status" value="1"/>
</dbReference>
<evidence type="ECO:0000269" key="1">
    <source>
    </source>
</evidence>
<evidence type="ECO:0000269" key="2">
    <source>
    </source>
</evidence>
<evidence type="ECO:0000305" key="3"/>
<evidence type="ECO:0007829" key="4">
    <source>
        <dbReference type="PDB" id="1O89"/>
    </source>
</evidence>
<evidence type="ECO:0007829" key="5">
    <source>
        <dbReference type="PDB" id="1O8C"/>
    </source>
</evidence>
<sequence>MQALLLEQQDGKTLASVQTLDESRLPEGDVTVDVHWSSLNYKDALAITGKGKIIRNFPMIPGIDFAGTVRTSEDPRFHAGQEVLLTGWGVGENHWGGLAEQARVKGDWLVAMPQGLDARKAMIIGTAGFTAMLCVMALEDAGVRPQDGEIVVTGASGGVGSTAVALLHKLGYQVVAVSGRESTHEYLKSLGASRVLPRDEFAESRPLEKQVWAGAIDTVGDKVLAKVLAQMNYGGCVAACGLAGGFTLPTTVMPFILRNVRLQGVDSVMTPPERRAQAWQRLVADLPESFYTQAAKEISLSEAPNFAEAIINNQIQGRTLVKVN</sequence>
<name>ACUI_ECOLI</name>